<dbReference type="EC" id="3.1.1.4"/>
<dbReference type="PIR" id="A90600">
    <property type="entry name" value="PSNJ3W"/>
</dbReference>
<dbReference type="SMR" id="P00601"/>
<dbReference type="GO" id="GO:0005576">
    <property type="term" value="C:extracellular region"/>
    <property type="evidence" value="ECO:0007669"/>
    <property type="project" value="UniProtKB-SubCell"/>
</dbReference>
<dbReference type="GO" id="GO:0005509">
    <property type="term" value="F:calcium ion binding"/>
    <property type="evidence" value="ECO:0007669"/>
    <property type="project" value="InterPro"/>
</dbReference>
<dbReference type="GO" id="GO:0047498">
    <property type="term" value="F:calcium-dependent phospholipase A2 activity"/>
    <property type="evidence" value="ECO:0007669"/>
    <property type="project" value="TreeGrafter"/>
</dbReference>
<dbReference type="GO" id="GO:0005543">
    <property type="term" value="F:phospholipid binding"/>
    <property type="evidence" value="ECO:0007669"/>
    <property type="project" value="TreeGrafter"/>
</dbReference>
<dbReference type="GO" id="GO:0050482">
    <property type="term" value="P:arachidonate secretion"/>
    <property type="evidence" value="ECO:0007669"/>
    <property type="project" value="InterPro"/>
</dbReference>
<dbReference type="GO" id="GO:0016042">
    <property type="term" value="P:lipid catabolic process"/>
    <property type="evidence" value="ECO:0007669"/>
    <property type="project" value="UniProtKB-KW"/>
</dbReference>
<dbReference type="GO" id="GO:0006644">
    <property type="term" value="P:phospholipid metabolic process"/>
    <property type="evidence" value="ECO:0007669"/>
    <property type="project" value="InterPro"/>
</dbReference>
<dbReference type="CDD" id="cd00125">
    <property type="entry name" value="PLA2c"/>
    <property type="match status" value="1"/>
</dbReference>
<dbReference type="FunFam" id="1.20.90.10:FF:000007">
    <property type="entry name" value="Acidic phospholipase A2"/>
    <property type="match status" value="1"/>
</dbReference>
<dbReference type="Gene3D" id="1.20.90.10">
    <property type="entry name" value="Phospholipase A2 domain"/>
    <property type="match status" value="1"/>
</dbReference>
<dbReference type="InterPro" id="IPR001211">
    <property type="entry name" value="PLipase_A2"/>
</dbReference>
<dbReference type="InterPro" id="IPR033112">
    <property type="entry name" value="PLipase_A2_Asp_AS"/>
</dbReference>
<dbReference type="InterPro" id="IPR016090">
    <property type="entry name" value="PLipase_A2_dom"/>
</dbReference>
<dbReference type="InterPro" id="IPR036444">
    <property type="entry name" value="PLipase_A2_dom_sf"/>
</dbReference>
<dbReference type="InterPro" id="IPR033113">
    <property type="entry name" value="PLipase_A2_His_AS"/>
</dbReference>
<dbReference type="PANTHER" id="PTHR11716:SF106">
    <property type="entry name" value="PHOSPHOLIPASE A2 A2-ACTITOXIN-UCS2A-LIKE"/>
    <property type="match status" value="1"/>
</dbReference>
<dbReference type="PANTHER" id="PTHR11716">
    <property type="entry name" value="PHOSPHOLIPASE A2 FAMILY MEMBER"/>
    <property type="match status" value="1"/>
</dbReference>
<dbReference type="Pfam" id="PF00068">
    <property type="entry name" value="Phospholip_A2_1"/>
    <property type="match status" value="1"/>
</dbReference>
<dbReference type="PRINTS" id="PR00389">
    <property type="entry name" value="PHPHLIPASEA2"/>
</dbReference>
<dbReference type="SMART" id="SM00085">
    <property type="entry name" value="PA2c"/>
    <property type="match status" value="1"/>
</dbReference>
<dbReference type="SUPFAM" id="SSF48619">
    <property type="entry name" value="Phospholipase A2, PLA2"/>
    <property type="match status" value="1"/>
</dbReference>
<dbReference type="PROSITE" id="PS00119">
    <property type="entry name" value="PA2_ASP"/>
    <property type="match status" value="1"/>
</dbReference>
<dbReference type="PROSITE" id="PS00118">
    <property type="entry name" value="PA2_HIS"/>
    <property type="match status" value="1"/>
</dbReference>
<keyword id="KW-0106">Calcium</keyword>
<keyword id="KW-0903">Direct protein sequencing</keyword>
<keyword id="KW-1015">Disulfide bond</keyword>
<keyword id="KW-0378">Hydrolase</keyword>
<keyword id="KW-0442">Lipid degradation</keyword>
<keyword id="KW-0443">Lipid metabolism</keyword>
<keyword id="KW-0479">Metal-binding</keyword>
<keyword id="KW-0964">Secreted</keyword>
<evidence type="ECO:0000250" key="1"/>
<evidence type="ECO:0000255" key="2">
    <source>
        <dbReference type="PROSITE-ProRule" id="PRU10035"/>
    </source>
</evidence>
<evidence type="ECO:0000255" key="3">
    <source>
        <dbReference type="PROSITE-ProRule" id="PRU10036"/>
    </source>
</evidence>
<evidence type="ECO:0000305" key="4"/>
<reference key="1">
    <citation type="journal article" date="1975" name="Biochim. Biophys. Acta">
        <title>Naja melanoleuca (forest cobra) venom. The amino acid sequence of phospholipase A, fraction DE-III.</title>
        <authorList>
            <person name="Joubert F.J."/>
        </authorList>
    </citation>
    <scope>PROTEIN SEQUENCE</scope>
    <source>
        <tissue>Venom</tissue>
    </source>
</reference>
<protein>
    <recommendedName>
        <fullName>Acidic phospholipase A2 DE-III</fullName>
        <shortName>svPLA2</shortName>
        <ecNumber>3.1.1.4</ecNumber>
    </recommendedName>
    <alternativeName>
        <fullName>Phosphatidylcholine 2-acylhydrolase</fullName>
    </alternativeName>
</protein>
<comment type="function">
    <text>PLA2 catalyzes the calcium-dependent hydrolysis of the 2-acyl groups in 3-sn-phosphoglycerides.</text>
</comment>
<comment type="catalytic activity">
    <reaction evidence="2 3">
        <text>a 1,2-diacyl-sn-glycero-3-phosphocholine + H2O = a 1-acyl-sn-glycero-3-phosphocholine + a fatty acid + H(+)</text>
        <dbReference type="Rhea" id="RHEA:15801"/>
        <dbReference type="ChEBI" id="CHEBI:15377"/>
        <dbReference type="ChEBI" id="CHEBI:15378"/>
        <dbReference type="ChEBI" id="CHEBI:28868"/>
        <dbReference type="ChEBI" id="CHEBI:57643"/>
        <dbReference type="ChEBI" id="CHEBI:58168"/>
        <dbReference type="EC" id="3.1.1.4"/>
    </reaction>
</comment>
<comment type="cofactor">
    <cofactor evidence="1">
        <name>Ca(2+)</name>
        <dbReference type="ChEBI" id="CHEBI:29108"/>
    </cofactor>
    <text evidence="1">Binds 1 Ca(2+) ion.</text>
</comment>
<comment type="subcellular location">
    <subcellularLocation>
        <location>Secreted</location>
    </subcellularLocation>
</comment>
<comment type="tissue specificity">
    <text>Expressed by the venom gland.</text>
</comment>
<comment type="similarity">
    <text evidence="4">Belongs to the phospholipase A2 family. Group I subfamily. D49 sub-subfamily.</text>
</comment>
<organism>
    <name type="scientific">Naja melanoleuca</name>
    <name type="common">Forest cobra</name>
    <name type="synonym">Black-lipped cobra</name>
    <dbReference type="NCBI Taxonomy" id="8643"/>
    <lineage>
        <taxon>Eukaryota</taxon>
        <taxon>Metazoa</taxon>
        <taxon>Chordata</taxon>
        <taxon>Craniata</taxon>
        <taxon>Vertebrata</taxon>
        <taxon>Euteleostomi</taxon>
        <taxon>Lepidosauria</taxon>
        <taxon>Squamata</taxon>
        <taxon>Bifurcata</taxon>
        <taxon>Unidentata</taxon>
        <taxon>Episquamata</taxon>
        <taxon>Toxicofera</taxon>
        <taxon>Serpentes</taxon>
        <taxon>Colubroidea</taxon>
        <taxon>Elapidae</taxon>
        <taxon>Elapinae</taxon>
        <taxon>Naja</taxon>
    </lineage>
</organism>
<sequence>NLYQFKNMIHCTVPNRSWWHFANYGCYCGRGGSGTPVDDLDRCCQIHDNCYGEAEKISGCWPYIKTYTYDSCQGTLTSCGAANNCAASVCDCDRVAANCFARAPYIDKNYNIDFNARCQ</sequence>
<accession>P00601</accession>
<name>PA2A3_NAJME</name>
<feature type="chain" id="PRO_0000161665" description="Acidic phospholipase A2 DE-III">
    <location>
        <begin position="1"/>
        <end position="119"/>
    </location>
</feature>
<feature type="active site" evidence="1">
    <location>
        <position position="47"/>
    </location>
</feature>
<feature type="active site" evidence="1">
    <location>
        <position position="93"/>
    </location>
</feature>
<feature type="binding site" evidence="1">
    <location>
        <position position="27"/>
    </location>
    <ligand>
        <name>Ca(2+)</name>
        <dbReference type="ChEBI" id="CHEBI:29108"/>
    </ligand>
</feature>
<feature type="binding site" evidence="1">
    <location>
        <position position="29"/>
    </location>
    <ligand>
        <name>Ca(2+)</name>
        <dbReference type="ChEBI" id="CHEBI:29108"/>
    </ligand>
</feature>
<feature type="binding site" evidence="1">
    <location>
        <position position="31"/>
    </location>
    <ligand>
        <name>Ca(2+)</name>
        <dbReference type="ChEBI" id="CHEBI:29108"/>
    </ligand>
</feature>
<feature type="binding site" evidence="1">
    <location>
        <position position="48"/>
    </location>
    <ligand>
        <name>Ca(2+)</name>
        <dbReference type="ChEBI" id="CHEBI:29108"/>
    </ligand>
</feature>
<feature type="disulfide bond" evidence="1">
    <location>
        <begin position="11"/>
        <end position="72"/>
    </location>
</feature>
<feature type="disulfide bond" evidence="1">
    <location>
        <begin position="26"/>
        <end position="118"/>
    </location>
</feature>
<feature type="disulfide bond" evidence="1">
    <location>
        <begin position="28"/>
        <end position="44"/>
    </location>
</feature>
<feature type="disulfide bond" evidence="1">
    <location>
        <begin position="43"/>
        <end position="99"/>
    </location>
</feature>
<feature type="disulfide bond" evidence="1">
    <location>
        <begin position="50"/>
        <end position="92"/>
    </location>
</feature>
<feature type="disulfide bond" evidence="1">
    <location>
        <begin position="60"/>
        <end position="85"/>
    </location>
</feature>
<feature type="disulfide bond" evidence="1">
    <location>
        <begin position="79"/>
        <end position="90"/>
    </location>
</feature>
<feature type="sequence variant">
    <original>P</original>
    <variation>T</variation>
    <location>
        <position position="104"/>
    </location>
</feature>
<feature type="sequence variant">
    <original>I</original>
    <variation>N</variation>
    <location>
        <position position="106"/>
    </location>
</feature>
<proteinExistence type="evidence at protein level"/>